<reference key="1">
    <citation type="submission" date="2007-03" db="EMBL/GenBank/DDBJ databases">
        <authorList>
            <person name="Heidelberg J."/>
        </authorList>
    </citation>
    <scope>NUCLEOTIDE SEQUENCE [LARGE SCALE GENOMIC DNA]</scope>
    <source>
        <strain>ATCC 39541 / Classical Ogawa 395 / O395</strain>
    </source>
</reference>
<reference key="2">
    <citation type="journal article" date="2008" name="PLoS ONE">
        <title>A recalibrated molecular clock and independent origins for the cholera pandemic clones.</title>
        <authorList>
            <person name="Feng L."/>
            <person name="Reeves P.R."/>
            <person name="Lan R."/>
            <person name="Ren Y."/>
            <person name="Gao C."/>
            <person name="Zhou Z."/>
            <person name="Ren Y."/>
            <person name="Cheng J."/>
            <person name="Wang W."/>
            <person name="Wang J."/>
            <person name="Qian W."/>
            <person name="Li D."/>
            <person name="Wang L."/>
        </authorList>
    </citation>
    <scope>NUCLEOTIDE SEQUENCE [LARGE SCALE GENOMIC DNA]</scope>
    <source>
        <strain>ATCC 39541 / Classical Ogawa 395 / O395</strain>
    </source>
</reference>
<protein>
    <recommendedName>
        <fullName evidence="1">Peptide methionine sulfoxide reductase MsrB</fullName>
        <ecNumber evidence="1">1.8.4.12</ecNumber>
    </recommendedName>
    <alternativeName>
        <fullName evidence="1">Peptide-methionine (R)-S-oxide reductase</fullName>
    </alternativeName>
</protein>
<accession>A5F6R2</accession>
<accession>C3M250</accession>
<keyword id="KW-0479">Metal-binding</keyword>
<keyword id="KW-0560">Oxidoreductase</keyword>
<keyword id="KW-0862">Zinc</keyword>
<sequence>MVSEAISKKEIERVKFESKDLHKPDEYWREHLTEEAFYVCRQQGTEAPYSGKLLHNKDTGLYHCTCCQSALFSSENKYDSGCGWPSFDAPINEQVIRFLDDFSHGMVRTEIRCAACDSHLGHVFEDGPKTTGLRFCVNSVSLIFNKK</sequence>
<feature type="chain" id="PRO_1000073497" description="Peptide methionine sulfoxide reductase MsrB">
    <location>
        <begin position="1"/>
        <end position="147"/>
    </location>
</feature>
<feature type="domain" description="MsrB" evidence="2">
    <location>
        <begin position="25"/>
        <end position="147"/>
    </location>
</feature>
<feature type="active site" description="Nucleophile" evidence="2">
    <location>
        <position position="136"/>
    </location>
</feature>
<feature type="binding site" evidence="2">
    <location>
        <position position="64"/>
    </location>
    <ligand>
        <name>Zn(2+)</name>
        <dbReference type="ChEBI" id="CHEBI:29105"/>
    </ligand>
</feature>
<feature type="binding site" evidence="2">
    <location>
        <position position="67"/>
    </location>
    <ligand>
        <name>Zn(2+)</name>
        <dbReference type="ChEBI" id="CHEBI:29105"/>
    </ligand>
</feature>
<feature type="binding site" evidence="2">
    <location>
        <position position="113"/>
    </location>
    <ligand>
        <name>Zn(2+)</name>
        <dbReference type="ChEBI" id="CHEBI:29105"/>
    </ligand>
</feature>
<feature type="binding site" evidence="2">
    <location>
        <position position="116"/>
    </location>
    <ligand>
        <name>Zn(2+)</name>
        <dbReference type="ChEBI" id="CHEBI:29105"/>
    </ligand>
</feature>
<proteinExistence type="inferred from homology"/>
<comment type="catalytic activity">
    <reaction evidence="1">
        <text>L-methionyl-[protein] + [thioredoxin]-disulfide + H2O = L-methionyl-(R)-S-oxide-[protein] + [thioredoxin]-dithiol</text>
        <dbReference type="Rhea" id="RHEA:24164"/>
        <dbReference type="Rhea" id="RHEA-COMP:10698"/>
        <dbReference type="Rhea" id="RHEA-COMP:10700"/>
        <dbReference type="Rhea" id="RHEA-COMP:12313"/>
        <dbReference type="Rhea" id="RHEA-COMP:12314"/>
        <dbReference type="ChEBI" id="CHEBI:15377"/>
        <dbReference type="ChEBI" id="CHEBI:16044"/>
        <dbReference type="ChEBI" id="CHEBI:29950"/>
        <dbReference type="ChEBI" id="CHEBI:45764"/>
        <dbReference type="ChEBI" id="CHEBI:50058"/>
        <dbReference type="EC" id="1.8.4.12"/>
    </reaction>
</comment>
<comment type="cofactor">
    <cofactor evidence="1">
        <name>Zn(2+)</name>
        <dbReference type="ChEBI" id="CHEBI:29105"/>
    </cofactor>
    <text evidence="1">Binds 1 zinc ion per subunit. The zinc ion is important for the structural integrity of the protein.</text>
</comment>
<comment type="similarity">
    <text evidence="1">Belongs to the MsrB Met sulfoxide reductase family.</text>
</comment>
<gene>
    <name evidence="1" type="primary">msrB</name>
    <name type="ordered locus">VC0395_A1584</name>
    <name type="ordered locus">VC395_2113</name>
</gene>
<name>MSRB_VIBC3</name>
<dbReference type="EC" id="1.8.4.12" evidence="1"/>
<dbReference type="EMBL" id="CP000627">
    <property type="protein sequence ID" value="ABQ20939.1"/>
    <property type="molecule type" value="Genomic_DNA"/>
</dbReference>
<dbReference type="EMBL" id="CP001235">
    <property type="protein sequence ID" value="ACP10105.1"/>
    <property type="molecule type" value="Genomic_DNA"/>
</dbReference>
<dbReference type="RefSeq" id="WP_001881721.1">
    <property type="nucleotide sequence ID" value="NZ_JAACZH010000001.1"/>
</dbReference>
<dbReference type="SMR" id="A5F6R2"/>
<dbReference type="KEGG" id="vco:VC0395_A1584"/>
<dbReference type="KEGG" id="vcr:VC395_2113"/>
<dbReference type="PATRIC" id="fig|345073.21.peg.2040"/>
<dbReference type="eggNOG" id="COG0229">
    <property type="taxonomic scope" value="Bacteria"/>
</dbReference>
<dbReference type="HOGENOM" id="CLU_031040_8_5_6"/>
<dbReference type="OrthoDB" id="9785497at2"/>
<dbReference type="Proteomes" id="UP000000249">
    <property type="component" value="Chromosome 2"/>
</dbReference>
<dbReference type="GO" id="GO:0005737">
    <property type="term" value="C:cytoplasm"/>
    <property type="evidence" value="ECO:0007669"/>
    <property type="project" value="TreeGrafter"/>
</dbReference>
<dbReference type="GO" id="GO:0033743">
    <property type="term" value="F:peptide-methionine (R)-S-oxide reductase activity"/>
    <property type="evidence" value="ECO:0007669"/>
    <property type="project" value="UniProtKB-UniRule"/>
</dbReference>
<dbReference type="GO" id="GO:0008270">
    <property type="term" value="F:zinc ion binding"/>
    <property type="evidence" value="ECO:0007669"/>
    <property type="project" value="UniProtKB-UniRule"/>
</dbReference>
<dbReference type="GO" id="GO:0030091">
    <property type="term" value="P:protein repair"/>
    <property type="evidence" value="ECO:0007669"/>
    <property type="project" value="InterPro"/>
</dbReference>
<dbReference type="GO" id="GO:0006979">
    <property type="term" value="P:response to oxidative stress"/>
    <property type="evidence" value="ECO:0007669"/>
    <property type="project" value="InterPro"/>
</dbReference>
<dbReference type="FunFam" id="2.170.150.20:FF:000009">
    <property type="entry name" value="Peptide-methionine (R)-S-oxide reductase"/>
    <property type="match status" value="1"/>
</dbReference>
<dbReference type="Gene3D" id="2.170.150.20">
    <property type="entry name" value="Peptide methionine sulfoxide reductase"/>
    <property type="match status" value="1"/>
</dbReference>
<dbReference type="HAMAP" id="MF_01400">
    <property type="entry name" value="MsrB"/>
    <property type="match status" value="1"/>
</dbReference>
<dbReference type="InterPro" id="IPR028427">
    <property type="entry name" value="Met_Sox_Rdtase_MsrB"/>
</dbReference>
<dbReference type="InterPro" id="IPR002579">
    <property type="entry name" value="Met_Sox_Rdtase_MsrB_dom"/>
</dbReference>
<dbReference type="InterPro" id="IPR011057">
    <property type="entry name" value="Mss4-like_sf"/>
</dbReference>
<dbReference type="NCBIfam" id="TIGR00357">
    <property type="entry name" value="peptide-methionine (R)-S-oxide reductase MsrB"/>
    <property type="match status" value="1"/>
</dbReference>
<dbReference type="PANTHER" id="PTHR10173">
    <property type="entry name" value="METHIONINE SULFOXIDE REDUCTASE"/>
    <property type="match status" value="1"/>
</dbReference>
<dbReference type="PANTHER" id="PTHR10173:SF52">
    <property type="entry name" value="METHIONINE-R-SULFOXIDE REDUCTASE B1"/>
    <property type="match status" value="1"/>
</dbReference>
<dbReference type="Pfam" id="PF01641">
    <property type="entry name" value="SelR"/>
    <property type="match status" value="1"/>
</dbReference>
<dbReference type="SUPFAM" id="SSF51316">
    <property type="entry name" value="Mss4-like"/>
    <property type="match status" value="1"/>
</dbReference>
<dbReference type="PROSITE" id="PS51790">
    <property type="entry name" value="MSRB"/>
    <property type="match status" value="1"/>
</dbReference>
<evidence type="ECO:0000255" key="1">
    <source>
        <dbReference type="HAMAP-Rule" id="MF_01400"/>
    </source>
</evidence>
<evidence type="ECO:0000255" key="2">
    <source>
        <dbReference type="PROSITE-ProRule" id="PRU01126"/>
    </source>
</evidence>
<organism>
    <name type="scientific">Vibrio cholerae serotype O1 (strain ATCC 39541 / Classical Ogawa 395 / O395)</name>
    <dbReference type="NCBI Taxonomy" id="345073"/>
    <lineage>
        <taxon>Bacteria</taxon>
        <taxon>Pseudomonadati</taxon>
        <taxon>Pseudomonadota</taxon>
        <taxon>Gammaproteobacteria</taxon>
        <taxon>Vibrionales</taxon>
        <taxon>Vibrionaceae</taxon>
        <taxon>Vibrio</taxon>
    </lineage>
</organism>